<name>HIS8_SYNE7</name>
<proteinExistence type="inferred from homology"/>
<feature type="chain" id="PRO_1000063507" description="Histidinol-phosphate aminotransferase">
    <location>
        <begin position="1"/>
        <end position="373"/>
    </location>
</feature>
<feature type="modified residue" description="N6-(pyridoxal phosphate)lysine" evidence="1">
    <location>
        <position position="230"/>
    </location>
</feature>
<accession>Q31PF9</accession>
<dbReference type="EC" id="2.6.1.9" evidence="1"/>
<dbReference type="EMBL" id="CP000100">
    <property type="protein sequence ID" value="ABB57060.1"/>
    <property type="molecule type" value="Genomic_DNA"/>
</dbReference>
<dbReference type="RefSeq" id="WP_011377834.1">
    <property type="nucleotide sequence ID" value="NZ_JACJTX010000003.1"/>
</dbReference>
<dbReference type="SMR" id="Q31PF9"/>
<dbReference type="STRING" id="1140.Synpcc7942_1030"/>
<dbReference type="PaxDb" id="1140-Synpcc7942_1030"/>
<dbReference type="DNASU" id="3773960"/>
<dbReference type="KEGG" id="syf:Synpcc7942_1030"/>
<dbReference type="eggNOG" id="COG0079">
    <property type="taxonomic scope" value="Bacteria"/>
</dbReference>
<dbReference type="HOGENOM" id="CLU_017584_3_1_3"/>
<dbReference type="OrthoDB" id="9813612at2"/>
<dbReference type="BioCyc" id="SYNEL:SYNPCC7942_1030-MONOMER"/>
<dbReference type="UniPathway" id="UPA00031">
    <property type="reaction ID" value="UER00012"/>
</dbReference>
<dbReference type="Proteomes" id="UP000889800">
    <property type="component" value="Chromosome"/>
</dbReference>
<dbReference type="GO" id="GO:0004400">
    <property type="term" value="F:histidinol-phosphate transaminase activity"/>
    <property type="evidence" value="ECO:0007669"/>
    <property type="project" value="UniProtKB-UniRule"/>
</dbReference>
<dbReference type="GO" id="GO:0030170">
    <property type="term" value="F:pyridoxal phosphate binding"/>
    <property type="evidence" value="ECO:0007669"/>
    <property type="project" value="InterPro"/>
</dbReference>
<dbReference type="GO" id="GO:0000105">
    <property type="term" value="P:L-histidine biosynthetic process"/>
    <property type="evidence" value="ECO:0007669"/>
    <property type="project" value="UniProtKB-UniRule"/>
</dbReference>
<dbReference type="CDD" id="cd00609">
    <property type="entry name" value="AAT_like"/>
    <property type="match status" value="1"/>
</dbReference>
<dbReference type="Gene3D" id="3.90.1150.10">
    <property type="entry name" value="Aspartate Aminotransferase, domain 1"/>
    <property type="match status" value="1"/>
</dbReference>
<dbReference type="Gene3D" id="3.40.640.10">
    <property type="entry name" value="Type I PLP-dependent aspartate aminotransferase-like (Major domain)"/>
    <property type="match status" value="1"/>
</dbReference>
<dbReference type="HAMAP" id="MF_01023">
    <property type="entry name" value="HisC_aminotrans_2"/>
    <property type="match status" value="1"/>
</dbReference>
<dbReference type="InterPro" id="IPR004839">
    <property type="entry name" value="Aminotransferase_I/II_large"/>
</dbReference>
<dbReference type="InterPro" id="IPR005861">
    <property type="entry name" value="HisP_aminotrans"/>
</dbReference>
<dbReference type="InterPro" id="IPR050106">
    <property type="entry name" value="HistidinolP_aminotransfase"/>
</dbReference>
<dbReference type="InterPro" id="IPR015424">
    <property type="entry name" value="PyrdxlP-dep_Trfase"/>
</dbReference>
<dbReference type="InterPro" id="IPR015421">
    <property type="entry name" value="PyrdxlP-dep_Trfase_major"/>
</dbReference>
<dbReference type="InterPro" id="IPR015422">
    <property type="entry name" value="PyrdxlP-dep_Trfase_small"/>
</dbReference>
<dbReference type="NCBIfam" id="NF002726">
    <property type="entry name" value="PRK02610.1"/>
    <property type="match status" value="1"/>
</dbReference>
<dbReference type="PANTHER" id="PTHR43643:SF6">
    <property type="entry name" value="HISTIDINOL-PHOSPHATE AMINOTRANSFERASE"/>
    <property type="match status" value="1"/>
</dbReference>
<dbReference type="PANTHER" id="PTHR43643">
    <property type="entry name" value="HISTIDINOL-PHOSPHATE AMINOTRANSFERASE 2"/>
    <property type="match status" value="1"/>
</dbReference>
<dbReference type="Pfam" id="PF00155">
    <property type="entry name" value="Aminotran_1_2"/>
    <property type="match status" value="1"/>
</dbReference>
<dbReference type="SUPFAM" id="SSF53383">
    <property type="entry name" value="PLP-dependent transferases"/>
    <property type="match status" value="1"/>
</dbReference>
<comment type="catalytic activity">
    <reaction evidence="1">
        <text>L-histidinol phosphate + 2-oxoglutarate = 3-(imidazol-4-yl)-2-oxopropyl phosphate + L-glutamate</text>
        <dbReference type="Rhea" id="RHEA:23744"/>
        <dbReference type="ChEBI" id="CHEBI:16810"/>
        <dbReference type="ChEBI" id="CHEBI:29985"/>
        <dbReference type="ChEBI" id="CHEBI:57766"/>
        <dbReference type="ChEBI" id="CHEBI:57980"/>
        <dbReference type="EC" id="2.6.1.9"/>
    </reaction>
</comment>
<comment type="cofactor">
    <cofactor evidence="1">
        <name>pyridoxal 5'-phosphate</name>
        <dbReference type="ChEBI" id="CHEBI:597326"/>
    </cofactor>
</comment>
<comment type="pathway">
    <text evidence="1">Amino-acid biosynthesis; L-histidine biosynthesis; L-histidine from 5-phospho-alpha-D-ribose 1-diphosphate: step 7/9.</text>
</comment>
<comment type="subunit">
    <text evidence="1">Homodimer.</text>
</comment>
<comment type="similarity">
    <text evidence="1">Belongs to the class-II pyridoxal-phosphate-dependent aminotransferase family. Histidinol-phosphate aminotransferase subfamily.</text>
</comment>
<keyword id="KW-0028">Amino-acid biosynthesis</keyword>
<keyword id="KW-0032">Aminotransferase</keyword>
<keyword id="KW-0368">Histidine biosynthesis</keyword>
<keyword id="KW-0663">Pyridoxal phosphate</keyword>
<keyword id="KW-1185">Reference proteome</keyword>
<keyword id="KW-0808">Transferase</keyword>
<evidence type="ECO:0000255" key="1">
    <source>
        <dbReference type="HAMAP-Rule" id="MF_01023"/>
    </source>
</evidence>
<sequence>MLPFLRSELARCQPYHPNPGGTGMAMDILDTNECPYDLPTDLKQTLADRYVEAIASNRYPDGSHTDLKAAIVDYLSEQTAGQWQPGPEHVTVGNGSDELIRSILIATCLGGQGSVLVAEPTFSMYGIVAETLGIPVVRIGRDPQTWEMDLAAAETAITQTEGTPVRLCFVVHPNSPTANPLTEAEKDWLRQVPPQILVVIDEAYFEFSGETLLAELPQHPNWLITRTFSKALRLAAHRVGYGIGDPQLIAALEAIRLPYNLPSVAQLAATLALEARSQLLSAIPRLITERDRLYRKLQVVSQLQVWPSASNFLFLKTQSSSQTAALAAQLKAQGTLVRHTADGLRITIGSPAENERTLAHLQTAITQSLPATV</sequence>
<organism>
    <name type="scientific">Synechococcus elongatus (strain ATCC 33912 / PCC 7942 / FACHB-805)</name>
    <name type="common">Anacystis nidulans R2</name>
    <dbReference type="NCBI Taxonomy" id="1140"/>
    <lineage>
        <taxon>Bacteria</taxon>
        <taxon>Bacillati</taxon>
        <taxon>Cyanobacteriota</taxon>
        <taxon>Cyanophyceae</taxon>
        <taxon>Synechococcales</taxon>
        <taxon>Synechococcaceae</taxon>
        <taxon>Synechococcus</taxon>
    </lineage>
</organism>
<protein>
    <recommendedName>
        <fullName evidence="1">Histidinol-phosphate aminotransferase</fullName>
        <ecNumber evidence="1">2.6.1.9</ecNumber>
    </recommendedName>
    <alternativeName>
        <fullName evidence="1">Imidazole acetol-phosphate transaminase</fullName>
    </alternativeName>
</protein>
<reference key="1">
    <citation type="submission" date="2005-08" db="EMBL/GenBank/DDBJ databases">
        <title>Complete sequence of chromosome 1 of Synechococcus elongatus PCC 7942.</title>
        <authorList>
            <consortium name="US DOE Joint Genome Institute"/>
            <person name="Copeland A."/>
            <person name="Lucas S."/>
            <person name="Lapidus A."/>
            <person name="Barry K."/>
            <person name="Detter J.C."/>
            <person name="Glavina T."/>
            <person name="Hammon N."/>
            <person name="Israni S."/>
            <person name="Pitluck S."/>
            <person name="Schmutz J."/>
            <person name="Larimer F."/>
            <person name="Land M."/>
            <person name="Kyrpides N."/>
            <person name="Lykidis A."/>
            <person name="Golden S."/>
            <person name="Richardson P."/>
        </authorList>
    </citation>
    <scope>NUCLEOTIDE SEQUENCE [LARGE SCALE GENOMIC DNA]</scope>
    <source>
        <strain>ATCC 33912 / PCC 7942 / FACHB-805</strain>
    </source>
</reference>
<gene>
    <name evidence="1" type="primary">hisC</name>
    <name type="ordered locus">Synpcc7942_1030</name>
</gene>